<evidence type="ECO:0000255" key="1">
    <source>
        <dbReference type="HAMAP-Rule" id="MF_00558"/>
    </source>
</evidence>
<comment type="function">
    <text evidence="1">Succinyl-CoA synthetase functions in the citric acid cycle (TCA), coupling the hydrolysis of succinyl-CoA to the synthesis of either ATP or GTP and thus represents the only step of substrate-level phosphorylation in the TCA. The beta subunit provides nucleotide specificity of the enzyme and binds the substrate succinate, while the binding sites for coenzyme A and phosphate are found in the alpha subunit.</text>
</comment>
<comment type="catalytic activity">
    <reaction evidence="1">
        <text>succinate + ATP + CoA = succinyl-CoA + ADP + phosphate</text>
        <dbReference type="Rhea" id="RHEA:17661"/>
        <dbReference type="ChEBI" id="CHEBI:30031"/>
        <dbReference type="ChEBI" id="CHEBI:30616"/>
        <dbReference type="ChEBI" id="CHEBI:43474"/>
        <dbReference type="ChEBI" id="CHEBI:57287"/>
        <dbReference type="ChEBI" id="CHEBI:57292"/>
        <dbReference type="ChEBI" id="CHEBI:456216"/>
        <dbReference type="EC" id="6.2.1.5"/>
    </reaction>
    <physiologicalReaction direction="right-to-left" evidence="1">
        <dbReference type="Rhea" id="RHEA:17663"/>
    </physiologicalReaction>
</comment>
<comment type="catalytic activity">
    <reaction evidence="1">
        <text>GTP + succinate + CoA = succinyl-CoA + GDP + phosphate</text>
        <dbReference type="Rhea" id="RHEA:22120"/>
        <dbReference type="ChEBI" id="CHEBI:30031"/>
        <dbReference type="ChEBI" id="CHEBI:37565"/>
        <dbReference type="ChEBI" id="CHEBI:43474"/>
        <dbReference type="ChEBI" id="CHEBI:57287"/>
        <dbReference type="ChEBI" id="CHEBI:57292"/>
        <dbReference type="ChEBI" id="CHEBI:58189"/>
    </reaction>
    <physiologicalReaction direction="right-to-left" evidence="1">
        <dbReference type="Rhea" id="RHEA:22122"/>
    </physiologicalReaction>
</comment>
<comment type="cofactor">
    <cofactor evidence="1">
        <name>Mg(2+)</name>
        <dbReference type="ChEBI" id="CHEBI:18420"/>
    </cofactor>
    <text evidence="1">Binds 1 Mg(2+) ion per subunit.</text>
</comment>
<comment type="pathway">
    <text evidence="1">Carbohydrate metabolism; tricarboxylic acid cycle; succinate from succinyl-CoA (ligase route): step 1/1.</text>
</comment>
<comment type="subunit">
    <text evidence="1">Heterotetramer of two alpha and two beta subunits.</text>
</comment>
<comment type="similarity">
    <text evidence="1">Belongs to the succinate/malate CoA ligase beta subunit family.</text>
</comment>
<reference key="1">
    <citation type="journal article" date="2008" name="J. Bacteriol.">
        <title>Complete genome sequence of the soil actinomycete Kocuria rhizophila.</title>
        <authorList>
            <person name="Takarada H."/>
            <person name="Sekine M."/>
            <person name="Kosugi H."/>
            <person name="Matsuo Y."/>
            <person name="Fujisawa T."/>
            <person name="Omata S."/>
            <person name="Kishi E."/>
            <person name="Shimizu A."/>
            <person name="Tsukatani N."/>
            <person name="Tanikawa S."/>
            <person name="Fujita N."/>
            <person name="Harayama S."/>
        </authorList>
    </citation>
    <scope>NUCLEOTIDE SEQUENCE [LARGE SCALE GENOMIC DNA]</scope>
    <source>
        <strain>ATCC 9341 / DSM 348 / NBRC 103217 / DC2201</strain>
    </source>
</reference>
<protein>
    <recommendedName>
        <fullName evidence="1">Succinate--CoA ligase [ADP-forming] subunit beta</fullName>
        <ecNumber evidence="1">6.2.1.5</ecNumber>
    </recommendedName>
    <alternativeName>
        <fullName evidence="1">Succinyl-CoA synthetase subunit beta</fullName>
        <shortName evidence="1">SCS-beta</shortName>
    </alternativeName>
</protein>
<organism>
    <name type="scientific">Kocuria rhizophila (strain ATCC 9341 / DSM 348 / NBRC 103217 / DC2201)</name>
    <dbReference type="NCBI Taxonomy" id="378753"/>
    <lineage>
        <taxon>Bacteria</taxon>
        <taxon>Bacillati</taxon>
        <taxon>Actinomycetota</taxon>
        <taxon>Actinomycetes</taxon>
        <taxon>Micrococcales</taxon>
        <taxon>Micrococcaceae</taxon>
        <taxon>Kocuria</taxon>
    </lineage>
</organism>
<gene>
    <name evidence="1" type="primary">sucC</name>
    <name type="ordered locus">KRH_18180</name>
</gene>
<proteinExistence type="inferred from homology"/>
<name>SUCC_KOCRD</name>
<keyword id="KW-0067">ATP-binding</keyword>
<keyword id="KW-0436">Ligase</keyword>
<keyword id="KW-0460">Magnesium</keyword>
<keyword id="KW-0479">Metal-binding</keyword>
<keyword id="KW-0547">Nucleotide-binding</keyword>
<keyword id="KW-1185">Reference proteome</keyword>
<keyword id="KW-0816">Tricarboxylic acid cycle</keyword>
<feature type="chain" id="PRO_1000129198" description="Succinate--CoA ligase [ADP-forming] subunit beta">
    <location>
        <begin position="1"/>
        <end position="389"/>
    </location>
</feature>
<feature type="domain" description="ATP-grasp" evidence="1">
    <location>
        <begin position="9"/>
        <end position="236"/>
    </location>
</feature>
<feature type="binding site" evidence="1">
    <location>
        <position position="45"/>
    </location>
    <ligand>
        <name>ATP</name>
        <dbReference type="ChEBI" id="CHEBI:30616"/>
    </ligand>
</feature>
<feature type="binding site" evidence="1">
    <location>
        <begin position="52"/>
        <end position="54"/>
    </location>
    <ligand>
        <name>ATP</name>
        <dbReference type="ChEBI" id="CHEBI:30616"/>
    </ligand>
</feature>
<feature type="binding site" evidence="1">
    <location>
        <position position="94"/>
    </location>
    <ligand>
        <name>ATP</name>
        <dbReference type="ChEBI" id="CHEBI:30616"/>
    </ligand>
</feature>
<feature type="binding site" evidence="1">
    <location>
        <position position="99"/>
    </location>
    <ligand>
        <name>ATP</name>
        <dbReference type="ChEBI" id="CHEBI:30616"/>
    </ligand>
</feature>
<feature type="binding site" evidence="1">
    <location>
        <position position="191"/>
    </location>
    <ligand>
        <name>Mg(2+)</name>
        <dbReference type="ChEBI" id="CHEBI:18420"/>
    </ligand>
</feature>
<feature type="binding site" evidence="1">
    <location>
        <position position="205"/>
    </location>
    <ligand>
        <name>Mg(2+)</name>
        <dbReference type="ChEBI" id="CHEBI:18420"/>
    </ligand>
</feature>
<feature type="binding site" evidence="1">
    <location>
        <position position="256"/>
    </location>
    <ligand>
        <name>substrate</name>
        <note>ligand shared with subunit alpha</note>
    </ligand>
</feature>
<feature type="binding site" evidence="1">
    <location>
        <begin position="318"/>
        <end position="320"/>
    </location>
    <ligand>
        <name>substrate</name>
        <note>ligand shared with subunit alpha</note>
    </ligand>
</feature>
<sequence length="389" mass="40920">MDLFEYQARDLFEKHGVPVLAGIVATTPEEAKAAAEKIGGVTVVKAQVKVGGRGKAGGVKVAKTPEEAYEYAQQILGMDIKGHTVHRVMIAQGADIAEEYYFSVLLDRANRSYLAMCSVEGGMEIEQLAVERPDALARVDVSPADGITEAKAREIVEQAKFDAETAEKVIPVLVKLGEVYAKEDATLVEVNPLVKTGDGEILALDGKVSLDDNAAFRHPEHAELADKTTADPLEEKAKENDLNYVKLDGEVGIIGNGAGLVMSTLDVVAYAGEKHGDVKPANFLDIGGGASAEVMAAGLDVILGDPQVKSVFVNVFGGITACDAVANGIVKALEILGDSATKPIVVRLDGNNVDEGRAILREANHPLITTADTMDAGADKAAELAHAAK</sequence>
<dbReference type="EC" id="6.2.1.5" evidence="1"/>
<dbReference type="EMBL" id="AP009152">
    <property type="protein sequence ID" value="BAG30165.1"/>
    <property type="molecule type" value="Genomic_DNA"/>
</dbReference>
<dbReference type="RefSeq" id="WP_012398886.1">
    <property type="nucleotide sequence ID" value="NC_010617.1"/>
</dbReference>
<dbReference type="SMR" id="B2GM49"/>
<dbReference type="STRING" id="378753.KRH_18180"/>
<dbReference type="KEGG" id="krh:KRH_18180"/>
<dbReference type="eggNOG" id="COG0045">
    <property type="taxonomic scope" value="Bacteria"/>
</dbReference>
<dbReference type="HOGENOM" id="CLU_037430_0_2_11"/>
<dbReference type="OrthoDB" id="9802602at2"/>
<dbReference type="UniPathway" id="UPA00223">
    <property type="reaction ID" value="UER00999"/>
</dbReference>
<dbReference type="Proteomes" id="UP000008838">
    <property type="component" value="Chromosome"/>
</dbReference>
<dbReference type="GO" id="GO:0005829">
    <property type="term" value="C:cytosol"/>
    <property type="evidence" value="ECO:0007669"/>
    <property type="project" value="TreeGrafter"/>
</dbReference>
<dbReference type="GO" id="GO:0042709">
    <property type="term" value="C:succinate-CoA ligase complex"/>
    <property type="evidence" value="ECO:0007669"/>
    <property type="project" value="TreeGrafter"/>
</dbReference>
<dbReference type="GO" id="GO:0005524">
    <property type="term" value="F:ATP binding"/>
    <property type="evidence" value="ECO:0007669"/>
    <property type="project" value="UniProtKB-UniRule"/>
</dbReference>
<dbReference type="GO" id="GO:0000287">
    <property type="term" value="F:magnesium ion binding"/>
    <property type="evidence" value="ECO:0007669"/>
    <property type="project" value="UniProtKB-UniRule"/>
</dbReference>
<dbReference type="GO" id="GO:0004775">
    <property type="term" value="F:succinate-CoA ligase (ADP-forming) activity"/>
    <property type="evidence" value="ECO:0007669"/>
    <property type="project" value="UniProtKB-UniRule"/>
</dbReference>
<dbReference type="GO" id="GO:0004776">
    <property type="term" value="F:succinate-CoA ligase (GDP-forming) activity"/>
    <property type="evidence" value="ECO:0007669"/>
    <property type="project" value="RHEA"/>
</dbReference>
<dbReference type="GO" id="GO:0006104">
    <property type="term" value="P:succinyl-CoA metabolic process"/>
    <property type="evidence" value="ECO:0007669"/>
    <property type="project" value="TreeGrafter"/>
</dbReference>
<dbReference type="GO" id="GO:0006099">
    <property type="term" value="P:tricarboxylic acid cycle"/>
    <property type="evidence" value="ECO:0007669"/>
    <property type="project" value="UniProtKB-UniRule"/>
</dbReference>
<dbReference type="FunFam" id="3.30.1490.20:FF:000014">
    <property type="entry name" value="Succinate--CoA ligase [ADP-forming] subunit beta"/>
    <property type="match status" value="1"/>
</dbReference>
<dbReference type="FunFam" id="3.30.470.20:FF:000002">
    <property type="entry name" value="Succinate--CoA ligase [ADP-forming] subunit beta"/>
    <property type="match status" value="1"/>
</dbReference>
<dbReference type="FunFam" id="3.40.50.261:FF:000007">
    <property type="entry name" value="Succinate--CoA ligase [ADP-forming] subunit beta"/>
    <property type="match status" value="1"/>
</dbReference>
<dbReference type="Gene3D" id="3.30.1490.20">
    <property type="entry name" value="ATP-grasp fold, A domain"/>
    <property type="match status" value="1"/>
</dbReference>
<dbReference type="Gene3D" id="3.30.470.20">
    <property type="entry name" value="ATP-grasp fold, B domain"/>
    <property type="match status" value="1"/>
</dbReference>
<dbReference type="Gene3D" id="3.40.50.261">
    <property type="entry name" value="Succinyl-CoA synthetase domains"/>
    <property type="match status" value="1"/>
</dbReference>
<dbReference type="HAMAP" id="MF_00558">
    <property type="entry name" value="Succ_CoA_beta"/>
    <property type="match status" value="1"/>
</dbReference>
<dbReference type="InterPro" id="IPR011761">
    <property type="entry name" value="ATP-grasp"/>
</dbReference>
<dbReference type="InterPro" id="IPR013650">
    <property type="entry name" value="ATP-grasp_succ-CoA_synth-type"/>
</dbReference>
<dbReference type="InterPro" id="IPR013815">
    <property type="entry name" value="ATP_grasp_subdomain_1"/>
</dbReference>
<dbReference type="InterPro" id="IPR017866">
    <property type="entry name" value="Succ-CoA_synthase_bsu_CS"/>
</dbReference>
<dbReference type="InterPro" id="IPR005811">
    <property type="entry name" value="SUCC_ACL_C"/>
</dbReference>
<dbReference type="InterPro" id="IPR005809">
    <property type="entry name" value="Succ_CoA_ligase-like_bsu"/>
</dbReference>
<dbReference type="InterPro" id="IPR016102">
    <property type="entry name" value="Succinyl-CoA_synth-like"/>
</dbReference>
<dbReference type="NCBIfam" id="NF001913">
    <property type="entry name" value="PRK00696.1"/>
    <property type="match status" value="1"/>
</dbReference>
<dbReference type="NCBIfam" id="TIGR01016">
    <property type="entry name" value="sucCoAbeta"/>
    <property type="match status" value="1"/>
</dbReference>
<dbReference type="PANTHER" id="PTHR11815:SF10">
    <property type="entry name" value="SUCCINATE--COA LIGASE [GDP-FORMING] SUBUNIT BETA, MITOCHONDRIAL"/>
    <property type="match status" value="1"/>
</dbReference>
<dbReference type="PANTHER" id="PTHR11815">
    <property type="entry name" value="SUCCINYL-COA SYNTHETASE BETA CHAIN"/>
    <property type="match status" value="1"/>
</dbReference>
<dbReference type="Pfam" id="PF08442">
    <property type="entry name" value="ATP-grasp_2"/>
    <property type="match status" value="1"/>
</dbReference>
<dbReference type="Pfam" id="PF00549">
    <property type="entry name" value="Ligase_CoA"/>
    <property type="match status" value="1"/>
</dbReference>
<dbReference type="PIRSF" id="PIRSF001554">
    <property type="entry name" value="SucCS_beta"/>
    <property type="match status" value="1"/>
</dbReference>
<dbReference type="SUPFAM" id="SSF56059">
    <property type="entry name" value="Glutathione synthetase ATP-binding domain-like"/>
    <property type="match status" value="1"/>
</dbReference>
<dbReference type="SUPFAM" id="SSF52210">
    <property type="entry name" value="Succinyl-CoA synthetase domains"/>
    <property type="match status" value="1"/>
</dbReference>
<dbReference type="PROSITE" id="PS50975">
    <property type="entry name" value="ATP_GRASP"/>
    <property type="match status" value="1"/>
</dbReference>
<dbReference type="PROSITE" id="PS01217">
    <property type="entry name" value="SUCCINYL_COA_LIG_3"/>
    <property type="match status" value="1"/>
</dbReference>
<accession>B2GM49</accession>